<gene>
    <name type="primary">mael2</name>
    <name type="ORF">GF20523</name>
</gene>
<feature type="chain" id="PRO_0000367296" description="Protein maelstrom 2">
    <location>
        <begin position="1"/>
        <end position="468"/>
    </location>
</feature>
<feature type="DNA-binding region" description="HMG box">
    <location>
        <begin position="2"/>
        <end position="69"/>
    </location>
</feature>
<feature type="region of interest" description="Disordered" evidence="2">
    <location>
        <begin position="374"/>
        <end position="393"/>
    </location>
</feature>
<feature type="compositionally biased region" description="Low complexity" evidence="2">
    <location>
        <begin position="381"/>
        <end position="393"/>
    </location>
</feature>
<evidence type="ECO:0000250" key="1"/>
<evidence type="ECO:0000256" key="2">
    <source>
        <dbReference type="SAM" id="MobiDB-lite"/>
    </source>
</evidence>
<evidence type="ECO:0000305" key="3"/>
<proteinExistence type="inferred from homology"/>
<reference key="1">
    <citation type="journal article" date="2007" name="Nature">
        <title>Evolution of genes and genomes on the Drosophila phylogeny.</title>
        <authorList>
            <consortium name="Drosophila 12 genomes consortium"/>
        </authorList>
    </citation>
    <scope>NUCLEOTIDE SEQUENCE [LARGE SCALE GENOMIC DNA]</scope>
    <source>
        <strain>Tucson 14024-0371.13</strain>
    </source>
</reference>
<protein>
    <recommendedName>
        <fullName>Protein maelstrom 2</fullName>
    </recommendedName>
</protein>
<sequence>MPPKKHSGFMMFVNEWRDNNPEGRNLSIAQAVSRCGSIWEKMTAQQRGPYNSGAKNADVLTRVKKERLNCHGQVLSQVELEEREMAESQIHMKRCTERIVMDAKRSHDLENTKFVFVAFNYFTKAFTTDVYVPAEFSASEYSFNEGIMSVYSTLIDPGQIIFGQGSDAQHHSSTTHNLPLPPNALGEKNMGKLYRNILEYLSKIQEGKDATKPFVVFTKTDMVPFVKSCFRYLACENQDGSYENGDQIQVLDIQYLLFIQKKEVLDIAGVSDEKINLYVTDAYFLKDFFEFTPEISCQYHEENDRSKYCTQSLVMRWAYTFSDYMCSDLAISVQPGKHIPPKTKPNYRVIPANSSVHESSFDSFYSIPASCEKKEDSPTVLSPASSRRSLASSPYVPTDHTSFVGDLNKKDEFPSLDQRNKLAALIDLIQFFYRCPVQLCRPLFSAGYHLNDALEPPHDPRDLYGRPL</sequence>
<accession>B3MZY6</accession>
<name>MAEL2_DROAN</name>
<organism>
    <name type="scientific">Drosophila ananassae</name>
    <name type="common">Fruit fly</name>
    <dbReference type="NCBI Taxonomy" id="7217"/>
    <lineage>
        <taxon>Eukaryota</taxon>
        <taxon>Metazoa</taxon>
        <taxon>Ecdysozoa</taxon>
        <taxon>Arthropoda</taxon>
        <taxon>Hexapoda</taxon>
        <taxon>Insecta</taxon>
        <taxon>Pterygota</taxon>
        <taxon>Neoptera</taxon>
        <taxon>Endopterygota</taxon>
        <taxon>Diptera</taxon>
        <taxon>Brachycera</taxon>
        <taxon>Muscomorpha</taxon>
        <taxon>Ephydroidea</taxon>
        <taxon>Drosophilidae</taxon>
        <taxon>Drosophila</taxon>
        <taxon>Sophophora</taxon>
    </lineage>
</organism>
<comment type="function">
    <text evidence="1">Involved both in the piRNA and miRNA metabolic processes. As a component of the meiotic nuage, plays a central role during oogenesis by repressing transposable elements and preventing their mobilization, which is essential for the germline integrity. Repression of transposable elements is mediated via the piRNA metabolic process, which mediates the repression of transposable elements during meiosis by forming complexes composed of piRNAs and Piwi proteins and governs the repression of transposons. As a nuclear component, it is required for proper differentiation in the germline stem cell (GSC) lineage by repressing microRNA-7 (miR-7), thereby acting as an indirect regulator of bag-of-marbles (Bam). Acts by binding to the promoter of miR-7 gene and repressing its expression; miR-7 repression alleviates the Bam repression by miR-7, thereby allowing differentiation in the germline stem cell (GSC) lineage (By similarity).</text>
</comment>
<comment type="subcellular location">
    <subcellularLocation>
        <location>Cytoplasm</location>
    </subcellularLocation>
    <subcellularLocation>
        <location>Nucleus</location>
    </subcellularLocation>
    <text evidence="1">Component of the meiotic nuage, also named P granule, a germ-cell-specific organelle required to repress transposon activity during meiosis.</text>
</comment>
<comment type="similarity">
    <text evidence="3">Belongs to the maelstrom family.</text>
</comment>
<dbReference type="EMBL" id="CH902636">
    <property type="protein sequence ID" value="EDV44771.1"/>
    <property type="molecule type" value="Genomic_DNA"/>
</dbReference>
<dbReference type="SMR" id="B3MZY6"/>
<dbReference type="FunCoup" id="B3MZY6">
    <property type="interactions" value="49"/>
</dbReference>
<dbReference type="STRING" id="7217.B3MZY6"/>
<dbReference type="GeneID" id="6503226"/>
<dbReference type="KEGG" id="dan:6503226"/>
<dbReference type="eggNOG" id="ENOG502QTQB">
    <property type="taxonomic scope" value="Eukaryota"/>
</dbReference>
<dbReference type="HOGENOM" id="CLU_044134_0_0_1"/>
<dbReference type="InParanoid" id="B3MZY6"/>
<dbReference type="OMA" id="KHEIFDH"/>
<dbReference type="OrthoDB" id="24555at2759"/>
<dbReference type="PhylomeDB" id="B3MZY6"/>
<dbReference type="Proteomes" id="UP000007801">
    <property type="component" value="Unassembled WGS sequence"/>
</dbReference>
<dbReference type="GO" id="GO:0005737">
    <property type="term" value="C:cytoplasm"/>
    <property type="evidence" value="ECO:0000250"/>
    <property type="project" value="UniProtKB"/>
</dbReference>
<dbReference type="GO" id="GO:0005634">
    <property type="term" value="C:nucleus"/>
    <property type="evidence" value="ECO:0000250"/>
    <property type="project" value="UniProtKB"/>
</dbReference>
<dbReference type="GO" id="GO:0043186">
    <property type="term" value="C:P granule"/>
    <property type="evidence" value="ECO:0000250"/>
    <property type="project" value="UniProtKB"/>
</dbReference>
<dbReference type="GO" id="GO:0048471">
    <property type="term" value="C:perinuclear region of cytoplasm"/>
    <property type="evidence" value="ECO:0000250"/>
    <property type="project" value="UniProtKB"/>
</dbReference>
<dbReference type="GO" id="GO:0000976">
    <property type="term" value="F:transcription cis-regulatory region binding"/>
    <property type="evidence" value="ECO:0000250"/>
    <property type="project" value="UniProtKB"/>
</dbReference>
<dbReference type="GO" id="GO:0030718">
    <property type="term" value="P:germ-line stem cell population maintenance"/>
    <property type="evidence" value="ECO:0000250"/>
    <property type="project" value="UniProtKB"/>
</dbReference>
<dbReference type="GO" id="GO:0007140">
    <property type="term" value="P:male meiotic nuclear division"/>
    <property type="evidence" value="ECO:0007669"/>
    <property type="project" value="TreeGrafter"/>
</dbReference>
<dbReference type="GO" id="GO:0045892">
    <property type="term" value="P:negative regulation of DNA-templated transcription"/>
    <property type="evidence" value="ECO:0000250"/>
    <property type="project" value="UniProtKB"/>
</dbReference>
<dbReference type="GO" id="GO:0048477">
    <property type="term" value="P:oogenesis"/>
    <property type="evidence" value="ECO:0007669"/>
    <property type="project" value="UniProtKB-KW"/>
</dbReference>
<dbReference type="GO" id="GO:0034587">
    <property type="term" value="P:piRNA processing"/>
    <property type="evidence" value="ECO:0000250"/>
    <property type="project" value="UniProtKB"/>
</dbReference>
<dbReference type="GO" id="GO:0060964">
    <property type="term" value="P:regulation of miRNA-mediated gene silencing"/>
    <property type="evidence" value="ECO:0007669"/>
    <property type="project" value="InterPro"/>
</dbReference>
<dbReference type="GO" id="GO:0031047">
    <property type="term" value="P:regulatory ncRNA-mediated gene silencing"/>
    <property type="evidence" value="ECO:0000250"/>
    <property type="project" value="UniProtKB"/>
</dbReference>
<dbReference type="GO" id="GO:0007283">
    <property type="term" value="P:spermatogenesis"/>
    <property type="evidence" value="ECO:0000250"/>
    <property type="project" value="UniProtKB"/>
</dbReference>
<dbReference type="FunFam" id="1.10.30.10:FF:000057">
    <property type="entry name" value="Protein maelstrom 2"/>
    <property type="match status" value="1"/>
</dbReference>
<dbReference type="Gene3D" id="1.10.30.10">
    <property type="entry name" value="High mobility group box domain"/>
    <property type="match status" value="1"/>
</dbReference>
<dbReference type="InterPro" id="IPR036910">
    <property type="entry name" value="HMG_box_dom_sf"/>
</dbReference>
<dbReference type="InterPro" id="IPR024970">
    <property type="entry name" value="Maelstrom"/>
</dbReference>
<dbReference type="InterPro" id="IPR039259">
    <property type="entry name" value="Protein_maelstrom"/>
</dbReference>
<dbReference type="PANTHER" id="PTHR21358">
    <property type="entry name" value="PROTEIN MAELSTROM HOMOLOG"/>
    <property type="match status" value="1"/>
</dbReference>
<dbReference type="PANTHER" id="PTHR21358:SF4">
    <property type="entry name" value="PROTEIN MAELSTROM HOMOLOG"/>
    <property type="match status" value="1"/>
</dbReference>
<dbReference type="Pfam" id="PF13017">
    <property type="entry name" value="Maelstrom"/>
    <property type="match status" value="1"/>
</dbReference>
<dbReference type="SUPFAM" id="SSF47095">
    <property type="entry name" value="HMG-box"/>
    <property type="match status" value="1"/>
</dbReference>
<keyword id="KW-0963">Cytoplasm</keyword>
<keyword id="KW-0217">Developmental protein</keyword>
<keyword id="KW-0221">Differentiation</keyword>
<keyword id="KW-0238">DNA-binding</keyword>
<keyword id="KW-0469">Meiosis</keyword>
<keyword id="KW-0539">Nucleus</keyword>
<keyword id="KW-0896">Oogenesis</keyword>
<keyword id="KW-1185">Reference proteome</keyword>
<keyword id="KW-0678">Repressor</keyword>
<keyword id="KW-0943">RNA-mediated gene silencing</keyword>
<keyword id="KW-0804">Transcription</keyword>
<keyword id="KW-0805">Transcription regulation</keyword>